<organism>
    <name type="scientific">Leptospira interrogans serogroup Icterohaemorrhagiae serovar Lai (strain 56601)</name>
    <dbReference type="NCBI Taxonomy" id="189518"/>
    <lineage>
        <taxon>Bacteria</taxon>
        <taxon>Pseudomonadati</taxon>
        <taxon>Spirochaetota</taxon>
        <taxon>Spirochaetia</taxon>
        <taxon>Leptospirales</taxon>
        <taxon>Leptospiraceae</taxon>
        <taxon>Leptospira</taxon>
    </lineage>
</organism>
<keyword id="KW-1185">Reference proteome</keyword>
<keyword id="KW-0687">Ribonucleoprotein</keyword>
<keyword id="KW-0689">Ribosomal protein</keyword>
<keyword id="KW-0694">RNA-binding</keyword>
<keyword id="KW-0699">rRNA-binding</keyword>
<keyword id="KW-0820">tRNA-binding</keyword>
<accession>Q9XD12</accession>
<comment type="function">
    <text evidence="1">Located at the top of the head of the 30S subunit, it contacts several helices of the 16S rRNA. In the 70S ribosome it contacts the 23S rRNA (bridge B1a) and protein L5 of the 50S subunit (bridge B1b), connecting the 2 subunits; these bridges are implicated in subunit movement. Contacts the tRNAs in the A and P-sites.</text>
</comment>
<comment type="subunit">
    <text evidence="1">Part of the 30S ribosomal subunit. Forms a loose heterodimer with protein S19. Forms two bridges to the 50S subunit in the 70S ribosome.</text>
</comment>
<comment type="similarity">
    <text evidence="1">Belongs to the universal ribosomal protein uS13 family.</text>
</comment>
<gene>
    <name evidence="1" type="primary">rpsM</name>
    <name type="ordered locus">LA_0762</name>
</gene>
<sequence>MARIAGIDLPREKRIVVGLTYIFGIGNSLSKLILKKAGIDESIRVKDLNESQEAAIRKTLEETAKVEGDLRSEIQLNIKRLMDIGCYRGLRHRRGLPVNGQRTRTNARTRKGGKKTVANKKKVTK</sequence>
<proteinExistence type="inferred from homology"/>
<reference key="1">
    <citation type="journal article" date="2000" name="FEMS Microbiol. Lett.">
        <title>Characterization of the Leptospira interrogans S10-spc-alpha operon.</title>
        <authorList>
            <person name="Zuerner R.L."/>
            <person name="Hartskeerl R.A."/>
            <person name="van de Kemp H."/>
            <person name="Bal A.E."/>
        </authorList>
    </citation>
    <scope>NUCLEOTIDE SEQUENCE [GENOMIC DNA]</scope>
    <source>
        <strain>Lai / Serogroup Icterohaemorrhagiae / Serovar lai</strain>
    </source>
</reference>
<reference key="2">
    <citation type="journal article" date="2003" name="Nature">
        <title>Unique physiological and pathogenic features of Leptospira interrogans revealed by whole-genome sequencing.</title>
        <authorList>
            <person name="Ren S.-X."/>
            <person name="Fu G."/>
            <person name="Jiang X.-G."/>
            <person name="Zeng R."/>
            <person name="Miao Y.-G."/>
            <person name="Xu H."/>
            <person name="Zhang Y.-X."/>
            <person name="Xiong H."/>
            <person name="Lu G."/>
            <person name="Lu L.-F."/>
            <person name="Jiang H.-Q."/>
            <person name="Jia J."/>
            <person name="Tu Y.-F."/>
            <person name="Jiang J.-X."/>
            <person name="Gu W.-Y."/>
            <person name="Zhang Y.-Q."/>
            <person name="Cai Z."/>
            <person name="Sheng H.-H."/>
            <person name="Yin H.-F."/>
            <person name="Zhang Y."/>
            <person name="Zhu G.-F."/>
            <person name="Wan M."/>
            <person name="Huang H.-L."/>
            <person name="Qian Z."/>
            <person name="Wang S.-Y."/>
            <person name="Ma W."/>
            <person name="Yao Z.-J."/>
            <person name="Shen Y."/>
            <person name="Qiang B.-Q."/>
            <person name="Xia Q.-C."/>
            <person name="Guo X.-K."/>
            <person name="Danchin A."/>
            <person name="Saint Girons I."/>
            <person name="Somerville R.L."/>
            <person name="Wen Y.-M."/>
            <person name="Shi M.-H."/>
            <person name="Chen Z."/>
            <person name="Xu J.-G."/>
            <person name="Zhao G.-P."/>
        </authorList>
    </citation>
    <scope>NUCLEOTIDE SEQUENCE [LARGE SCALE GENOMIC DNA]</scope>
    <source>
        <strain>56601</strain>
    </source>
</reference>
<dbReference type="EMBL" id="AF115283">
    <property type="protein sequence ID" value="AAD40607.1"/>
    <property type="molecule type" value="Genomic_DNA"/>
</dbReference>
<dbReference type="EMBL" id="AE010300">
    <property type="protein sequence ID" value="AAN47961.1"/>
    <property type="molecule type" value="Genomic_DNA"/>
</dbReference>
<dbReference type="RefSeq" id="NP_710943.1">
    <property type="nucleotide sequence ID" value="NC_004342.2"/>
</dbReference>
<dbReference type="RefSeq" id="WP_000090769.1">
    <property type="nucleotide sequence ID" value="NC_004342.2"/>
</dbReference>
<dbReference type="SMR" id="Q9XD12"/>
<dbReference type="FunCoup" id="Q9XD12">
    <property type="interactions" value="537"/>
</dbReference>
<dbReference type="STRING" id="189518.LA_0762"/>
<dbReference type="PaxDb" id="189518-LA_0762"/>
<dbReference type="EnsemblBacteria" id="AAN47961">
    <property type="protein sequence ID" value="AAN47961"/>
    <property type="gene ID" value="LA_0762"/>
</dbReference>
<dbReference type="GeneID" id="61142723"/>
<dbReference type="KEGG" id="lil:LA_0762"/>
<dbReference type="PATRIC" id="fig|189518.3.peg.769"/>
<dbReference type="HOGENOM" id="CLU_103849_1_2_12"/>
<dbReference type="InParanoid" id="Q9XD12"/>
<dbReference type="OrthoDB" id="9803610at2"/>
<dbReference type="Proteomes" id="UP000001408">
    <property type="component" value="Chromosome I"/>
</dbReference>
<dbReference type="GO" id="GO:0005829">
    <property type="term" value="C:cytosol"/>
    <property type="evidence" value="ECO:0000318"/>
    <property type="project" value="GO_Central"/>
</dbReference>
<dbReference type="GO" id="GO:0015935">
    <property type="term" value="C:small ribosomal subunit"/>
    <property type="evidence" value="ECO:0000318"/>
    <property type="project" value="GO_Central"/>
</dbReference>
<dbReference type="GO" id="GO:0019843">
    <property type="term" value="F:rRNA binding"/>
    <property type="evidence" value="ECO:0007669"/>
    <property type="project" value="UniProtKB-UniRule"/>
</dbReference>
<dbReference type="GO" id="GO:0003735">
    <property type="term" value="F:structural constituent of ribosome"/>
    <property type="evidence" value="ECO:0007669"/>
    <property type="project" value="InterPro"/>
</dbReference>
<dbReference type="GO" id="GO:0000049">
    <property type="term" value="F:tRNA binding"/>
    <property type="evidence" value="ECO:0007669"/>
    <property type="project" value="UniProtKB-UniRule"/>
</dbReference>
<dbReference type="GO" id="GO:0006412">
    <property type="term" value="P:translation"/>
    <property type="evidence" value="ECO:0007669"/>
    <property type="project" value="UniProtKB-UniRule"/>
</dbReference>
<dbReference type="FunFam" id="1.10.8.50:FF:000001">
    <property type="entry name" value="30S ribosomal protein S13"/>
    <property type="match status" value="1"/>
</dbReference>
<dbReference type="FunFam" id="4.10.910.10:FF:000001">
    <property type="entry name" value="30S ribosomal protein S13"/>
    <property type="match status" value="1"/>
</dbReference>
<dbReference type="Gene3D" id="1.10.8.50">
    <property type="match status" value="1"/>
</dbReference>
<dbReference type="Gene3D" id="4.10.910.10">
    <property type="entry name" value="30s ribosomal protein s13, domain 2"/>
    <property type="match status" value="1"/>
</dbReference>
<dbReference type="HAMAP" id="MF_01315">
    <property type="entry name" value="Ribosomal_uS13"/>
    <property type="match status" value="1"/>
</dbReference>
<dbReference type="InterPro" id="IPR027437">
    <property type="entry name" value="Rbsml_uS13_C"/>
</dbReference>
<dbReference type="InterPro" id="IPR001892">
    <property type="entry name" value="Ribosomal_uS13"/>
</dbReference>
<dbReference type="InterPro" id="IPR010979">
    <property type="entry name" value="Ribosomal_uS13-like_H2TH"/>
</dbReference>
<dbReference type="InterPro" id="IPR019980">
    <property type="entry name" value="Ribosomal_uS13_bac-type"/>
</dbReference>
<dbReference type="InterPro" id="IPR018269">
    <property type="entry name" value="Ribosomal_uS13_CS"/>
</dbReference>
<dbReference type="NCBIfam" id="TIGR03631">
    <property type="entry name" value="uS13_bact"/>
    <property type="match status" value="1"/>
</dbReference>
<dbReference type="PANTHER" id="PTHR10871">
    <property type="entry name" value="30S RIBOSOMAL PROTEIN S13/40S RIBOSOMAL PROTEIN S18"/>
    <property type="match status" value="1"/>
</dbReference>
<dbReference type="PANTHER" id="PTHR10871:SF1">
    <property type="entry name" value="SMALL RIBOSOMAL SUBUNIT PROTEIN US13M"/>
    <property type="match status" value="1"/>
</dbReference>
<dbReference type="Pfam" id="PF00416">
    <property type="entry name" value="Ribosomal_S13"/>
    <property type="match status" value="1"/>
</dbReference>
<dbReference type="PIRSF" id="PIRSF002134">
    <property type="entry name" value="Ribosomal_S13"/>
    <property type="match status" value="1"/>
</dbReference>
<dbReference type="SUPFAM" id="SSF46946">
    <property type="entry name" value="S13-like H2TH domain"/>
    <property type="match status" value="1"/>
</dbReference>
<dbReference type="PROSITE" id="PS00646">
    <property type="entry name" value="RIBOSOMAL_S13_1"/>
    <property type="match status" value="1"/>
</dbReference>
<dbReference type="PROSITE" id="PS50159">
    <property type="entry name" value="RIBOSOMAL_S13_2"/>
    <property type="match status" value="1"/>
</dbReference>
<feature type="chain" id="PRO_0000132102" description="Small ribosomal subunit protein uS13">
    <location>
        <begin position="1"/>
        <end position="125"/>
    </location>
</feature>
<feature type="region of interest" description="Disordered" evidence="2">
    <location>
        <begin position="95"/>
        <end position="125"/>
    </location>
</feature>
<feature type="compositionally biased region" description="Basic residues" evidence="2">
    <location>
        <begin position="105"/>
        <end position="125"/>
    </location>
</feature>
<feature type="sequence conflict" description="In Ref. 1; AAD40607." evidence="3" ref="1">
    <original>Q</original>
    <variation>R</variation>
    <location>
        <position position="75"/>
    </location>
</feature>
<evidence type="ECO:0000255" key="1">
    <source>
        <dbReference type="HAMAP-Rule" id="MF_01315"/>
    </source>
</evidence>
<evidence type="ECO:0000256" key="2">
    <source>
        <dbReference type="SAM" id="MobiDB-lite"/>
    </source>
</evidence>
<evidence type="ECO:0000305" key="3"/>
<name>RS13_LEPIN</name>
<protein>
    <recommendedName>
        <fullName evidence="1">Small ribosomal subunit protein uS13</fullName>
    </recommendedName>
    <alternativeName>
        <fullName evidence="3">30S ribosomal protein S13</fullName>
    </alternativeName>
</protein>